<gene>
    <name evidence="1" type="primary">lacG</name>
    <name type="ordered locus">SUB0800</name>
</gene>
<protein>
    <recommendedName>
        <fullName evidence="1">6-phospho-beta-galactosidase</fullName>
        <ecNumber evidence="1">3.2.1.85</ecNumber>
    </recommendedName>
    <alternativeName>
        <fullName evidence="1">Beta-D-phosphogalactoside galactohydrolase</fullName>
        <shortName evidence="1">PGALase</shortName>
    </alternativeName>
    <alternativeName>
        <fullName evidence="1">P-beta-Gal</fullName>
        <shortName evidence="1">PBG</shortName>
    </alternativeName>
</protein>
<accession>B9DU98</accession>
<evidence type="ECO:0000255" key="1">
    <source>
        <dbReference type="HAMAP-Rule" id="MF_01574"/>
    </source>
</evidence>
<name>LACG_STRU0</name>
<sequence length="468" mass="53815">MTKTLPKDFIFGGATAAYQAEGATKTDGKGPVAWDKYLEDNYWYTAEPASDFYNRYPVDLKLAEEYNVNGIRISIAWSRVFPTGYGEVNRKGVEYYHNLFAECHKRGVEPFVTLHHFDTPEALHSNGDFLNRDNIDHFVAYAAFCFEEFPEVNYWTTFNEIGPIGDGQYLVGKFPPGIQYDLAKVFQSHHNMMVSHARAVKLYKDKGYKGEIGVVHALPTKYPYDPANPDDVRAAELEDIIHNKFILDATYLGRYSEKTMEGVQHILAANGGELDLREEDFSILEAAKDLNDFLGINYYMSDWMQAFDGETEIIHNGKGEKGSSKYQIKGVGRREAPVNVPKTDWDWIIYPQGLYDQIMRVKADYPNYKKIYITENGLGYKDEFVDGTVYDDGRIDYVKKHLEVISDAISDGANVKGYFIWSLMDVFSWSNGYEKRYGLFYVDFETQERYPKKSAHWYKKVAETQVID</sequence>
<feature type="chain" id="PRO_1000185576" description="6-phospho-beta-galactosidase">
    <location>
        <begin position="1"/>
        <end position="468"/>
    </location>
</feature>
<feature type="active site" description="Proton donor" evidence="1">
    <location>
        <position position="160"/>
    </location>
</feature>
<feature type="active site" description="Nucleophile" evidence="1">
    <location>
        <position position="375"/>
    </location>
</feature>
<feature type="binding site" evidence="1">
    <location>
        <position position="19"/>
    </location>
    <ligand>
        <name>D-galactose 6-phosphate</name>
        <dbReference type="ChEBI" id="CHEBI:91004"/>
    </ligand>
</feature>
<feature type="binding site" evidence="1">
    <location>
        <position position="116"/>
    </location>
    <ligand>
        <name>D-galactose 6-phosphate</name>
        <dbReference type="ChEBI" id="CHEBI:91004"/>
    </ligand>
</feature>
<feature type="binding site" evidence="1">
    <location>
        <position position="159"/>
    </location>
    <ligand>
        <name>D-galactose 6-phosphate</name>
        <dbReference type="ChEBI" id="CHEBI:91004"/>
    </ligand>
</feature>
<feature type="binding site" evidence="1">
    <location>
        <position position="160"/>
    </location>
    <ligand>
        <name>D-galactose 6-phosphate</name>
        <dbReference type="ChEBI" id="CHEBI:91004"/>
    </ligand>
</feature>
<feature type="binding site" evidence="1">
    <location>
        <position position="297"/>
    </location>
    <ligand>
        <name>D-galactose 6-phosphate</name>
        <dbReference type="ChEBI" id="CHEBI:91004"/>
    </ligand>
</feature>
<feature type="binding site" evidence="1">
    <location>
        <position position="428"/>
    </location>
    <ligand>
        <name>D-galactose 6-phosphate</name>
        <dbReference type="ChEBI" id="CHEBI:91004"/>
    </ligand>
</feature>
<feature type="binding site" evidence="1">
    <location>
        <position position="429"/>
    </location>
    <ligand>
        <name>D-galactose 6-phosphate</name>
        <dbReference type="ChEBI" id="CHEBI:91004"/>
    </ligand>
</feature>
<feature type="binding site" evidence="1">
    <location>
        <position position="435"/>
    </location>
    <ligand>
        <name>D-galactose 6-phosphate</name>
        <dbReference type="ChEBI" id="CHEBI:91004"/>
    </ligand>
</feature>
<feature type="binding site" evidence="1">
    <location>
        <position position="437"/>
    </location>
    <ligand>
        <name>D-galactose 6-phosphate</name>
        <dbReference type="ChEBI" id="CHEBI:91004"/>
    </ligand>
</feature>
<reference key="1">
    <citation type="journal article" date="2009" name="BMC Genomics">
        <title>Evidence for niche adaptation in the genome of the bovine pathogen Streptococcus uberis.</title>
        <authorList>
            <person name="Ward P.N."/>
            <person name="Holden M.T.G."/>
            <person name="Leigh J.A."/>
            <person name="Lennard N."/>
            <person name="Bignell A."/>
            <person name="Barron A."/>
            <person name="Clark L."/>
            <person name="Quail M.A."/>
            <person name="Woodward J."/>
            <person name="Barrell B.G."/>
            <person name="Egan S.A."/>
            <person name="Field T.R."/>
            <person name="Maskell D."/>
            <person name="Kehoe M."/>
            <person name="Dowson C.G."/>
            <person name="Chanter N."/>
            <person name="Whatmore A.M."/>
            <person name="Bentley S.D."/>
            <person name="Parkhill J."/>
        </authorList>
    </citation>
    <scope>NUCLEOTIDE SEQUENCE [LARGE SCALE GENOMIC DNA]</scope>
    <source>
        <strain>ATCC BAA-854 / 0140J</strain>
    </source>
</reference>
<keyword id="KW-0326">Glycosidase</keyword>
<keyword id="KW-0378">Hydrolase</keyword>
<keyword id="KW-1185">Reference proteome</keyword>
<organism>
    <name type="scientific">Streptococcus uberis (strain ATCC BAA-854 / 0140J)</name>
    <dbReference type="NCBI Taxonomy" id="218495"/>
    <lineage>
        <taxon>Bacteria</taxon>
        <taxon>Bacillati</taxon>
        <taxon>Bacillota</taxon>
        <taxon>Bacilli</taxon>
        <taxon>Lactobacillales</taxon>
        <taxon>Streptococcaceae</taxon>
        <taxon>Streptococcus</taxon>
    </lineage>
</organism>
<proteinExistence type="inferred from homology"/>
<dbReference type="EC" id="3.2.1.85" evidence="1"/>
<dbReference type="EMBL" id="AM946015">
    <property type="protein sequence ID" value="CAR41805.1"/>
    <property type="molecule type" value="Genomic_DNA"/>
</dbReference>
<dbReference type="RefSeq" id="WP_012658310.1">
    <property type="nucleotide sequence ID" value="NC_012004.1"/>
</dbReference>
<dbReference type="SMR" id="B9DU98"/>
<dbReference type="STRING" id="218495.SUB0800"/>
<dbReference type="CAZy" id="GH1">
    <property type="family name" value="Glycoside Hydrolase Family 1"/>
</dbReference>
<dbReference type="KEGG" id="sub:SUB0800"/>
<dbReference type="eggNOG" id="COG2723">
    <property type="taxonomic scope" value="Bacteria"/>
</dbReference>
<dbReference type="HOGENOM" id="CLU_001859_1_3_9"/>
<dbReference type="OrthoDB" id="9765195at2"/>
<dbReference type="UniPathway" id="UPA00542">
    <property type="reaction ID" value="UER00605"/>
</dbReference>
<dbReference type="Proteomes" id="UP000000449">
    <property type="component" value="Chromosome"/>
</dbReference>
<dbReference type="GO" id="GO:0005829">
    <property type="term" value="C:cytosol"/>
    <property type="evidence" value="ECO:0007669"/>
    <property type="project" value="TreeGrafter"/>
</dbReference>
<dbReference type="GO" id="GO:0033920">
    <property type="term" value="F:6-phospho-beta-galactosidase activity"/>
    <property type="evidence" value="ECO:0007669"/>
    <property type="project" value="UniProtKB-UniRule"/>
</dbReference>
<dbReference type="GO" id="GO:0008422">
    <property type="term" value="F:beta-glucosidase activity"/>
    <property type="evidence" value="ECO:0007669"/>
    <property type="project" value="TreeGrafter"/>
</dbReference>
<dbReference type="GO" id="GO:0019512">
    <property type="term" value="P:lactose catabolic process via tagatose-6-phosphate"/>
    <property type="evidence" value="ECO:0007669"/>
    <property type="project" value="InterPro"/>
</dbReference>
<dbReference type="FunFam" id="3.20.20.80:FF:000004">
    <property type="entry name" value="Beta-glucosidase 6-phospho-beta-glucosidase"/>
    <property type="match status" value="1"/>
</dbReference>
<dbReference type="Gene3D" id="3.20.20.80">
    <property type="entry name" value="Glycosidases"/>
    <property type="match status" value="1"/>
</dbReference>
<dbReference type="HAMAP" id="MF_01574">
    <property type="entry name" value="LacG"/>
    <property type="match status" value="1"/>
</dbReference>
<dbReference type="InterPro" id="IPR005928">
    <property type="entry name" value="6P-beta-galactosidase"/>
</dbReference>
<dbReference type="InterPro" id="IPR001360">
    <property type="entry name" value="Glyco_hydro_1"/>
</dbReference>
<dbReference type="InterPro" id="IPR018120">
    <property type="entry name" value="Glyco_hydro_1_AS"/>
</dbReference>
<dbReference type="InterPro" id="IPR033132">
    <property type="entry name" value="Glyco_hydro_1_N_CS"/>
</dbReference>
<dbReference type="InterPro" id="IPR017853">
    <property type="entry name" value="Glycoside_hydrolase_SF"/>
</dbReference>
<dbReference type="NCBIfam" id="TIGR01233">
    <property type="entry name" value="lacG"/>
    <property type="match status" value="1"/>
</dbReference>
<dbReference type="NCBIfam" id="NF010036">
    <property type="entry name" value="PRK13511.1"/>
    <property type="match status" value="1"/>
</dbReference>
<dbReference type="PANTHER" id="PTHR10353">
    <property type="entry name" value="GLYCOSYL HYDROLASE"/>
    <property type="match status" value="1"/>
</dbReference>
<dbReference type="PANTHER" id="PTHR10353:SF36">
    <property type="entry name" value="LP05116P"/>
    <property type="match status" value="1"/>
</dbReference>
<dbReference type="Pfam" id="PF00232">
    <property type="entry name" value="Glyco_hydro_1"/>
    <property type="match status" value="1"/>
</dbReference>
<dbReference type="PRINTS" id="PR00131">
    <property type="entry name" value="GLHYDRLASE1"/>
</dbReference>
<dbReference type="SUPFAM" id="SSF51445">
    <property type="entry name" value="(Trans)glycosidases"/>
    <property type="match status" value="1"/>
</dbReference>
<dbReference type="PROSITE" id="PS00572">
    <property type="entry name" value="GLYCOSYL_HYDROL_F1_1"/>
    <property type="match status" value="1"/>
</dbReference>
<dbReference type="PROSITE" id="PS00653">
    <property type="entry name" value="GLYCOSYL_HYDROL_F1_2"/>
    <property type="match status" value="1"/>
</dbReference>
<comment type="catalytic activity">
    <reaction evidence="1">
        <text>a 6-phospho-beta-D-galactoside + H2O = D-galactose 6-phosphate + an alcohol</text>
        <dbReference type="Rhea" id="RHEA:24568"/>
        <dbReference type="ChEBI" id="CHEBI:15377"/>
        <dbReference type="ChEBI" id="CHEBI:30879"/>
        <dbReference type="ChEBI" id="CHEBI:58534"/>
        <dbReference type="ChEBI" id="CHEBI:91004"/>
        <dbReference type="EC" id="3.2.1.85"/>
    </reaction>
</comment>
<comment type="pathway">
    <text evidence="1">Carbohydrate metabolism; lactose degradation; D-galactose 6-phosphate and beta-D-glucose from lactose 6-phosphate: step 1/1.</text>
</comment>
<comment type="similarity">
    <text evidence="1">Belongs to the glycosyl hydrolase 1 family.</text>
</comment>